<dbReference type="EMBL" id="AE000657">
    <property type="protein sequence ID" value="AAC07255.1"/>
    <property type="molecule type" value="Genomic_DNA"/>
</dbReference>
<dbReference type="PIR" id="B70408">
    <property type="entry name" value="B70408"/>
</dbReference>
<dbReference type="RefSeq" id="NP_213857.1">
    <property type="nucleotide sequence ID" value="NC_000918.1"/>
</dbReference>
<dbReference type="SMR" id="O67293"/>
<dbReference type="FunCoup" id="O67293">
    <property type="interactions" value="80"/>
</dbReference>
<dbReference type="STRING" id="224324.aq_1250"/>
<dbReference type="EnsemblBacteria" id="AAC07255">
    <property type="protein sequence ID" value="AAC07255"/>
    <property type="gene ID" value="aq_1250"/>
</dbReference>
<dbReference type="KEGG" id="aae:aq_1250"/>
<dbReference type="eggNOG" id="COG1881">
    <property type="taxonomic scope" value="Bacteria"/>
</dbReference>
<dbReference type="HOGENOM" id="CLU_083918_3_2_0"/>
<dbReference type="InParanoid" id="O67293"/>
<dbReference type="OrthoDB" id="9797506at2"/>
<dbReference type="Proteomes" id="UP000000798">
    <property type="component" value="Chromosome"/>
</dbReference>
<dbReference type="CDD" id="cd00865">
    <property type="entry name" value="PEBP_bact_arch"/>
    <property type="match status" value="1"/>
</dbReference>
<dbReference type="Gene3D" id="3.90.280.10">
    <property type="entry name" value="PEBP-like"/>
    <property type="match status" value="1"/>
</dbReference>
<dbReference type="InterPro" id="IPR008914">
    <property type="entry name" value="PEBP"/>
</dbReference>
<dbReference type="InterPro" id="IPR036610">
    <property type="entry name" value="PEBP-like_sf"/>
</dbReference>
<dbReference type="InterPro" id="IPR005247">
    <property type="entry name" value="YbhB_YbcL/LppC-like"/>
</dbReference>
<dbReference type="NCBIfam" id="TIGR00481">
    <property type="entry name" value="YbhB/YbcL family Raf kinase inhibitor-like protein"/>
    <property type="match status" value="1"/>
</dbReference>
<dbReference type="PANTHER" id="PTHR30289:SF1">
    <property type="entry name" value="PEBP (PHOSPHATIDYLETHANOLAMINE-BINDING PROTEIN) FAMILY PROTEIN"/>
    <property type="match status" value="1"/>
</dbReference>
<dbReference type="PANTHER" id="PTHR30289">
    <property type="entry name" value="UNCHARACTERIZED PROTEIN YBCL-RELATED"/>
    <property type="match status" value="1"/>
</dbReference>
<dbReference type="Pfam" id="PF01161">
    <property type="entry name" value="PBP"/>
    <property type="match status" value="1"/>
</dbReference>
<dbReference type="SUPFAM" id="SSF49777">
    <property type="entry name" value="PEBP-like"/>
    <property type="match status" value="1"/>
</dbReference>
<protein>
    <recommendedName>
        <fullName>UPF0098 protein aq_1250</fullName>
    </recommendedName>
</protein>
<feature type="chain" id="PRO_0000137901" description="UPF0098 protein aq_1250">
    <location>
        <begin position="1"/>
        <end position="171"/>
    </location>
</feature>
<gene>
    <name type="ordered locus">aq_1250</name>
</gene>
<keyword id="KW-1185">Reference proteome</keyword>
<name>Y1250_AQUAE</name>
<proteinExistence type="inferred from homology"/>
<organism>
    <name type="scientific">Aquifex aeolicus (strain VF5)</name>
    <dbReference type="NCBI Taxonomy" id="224324"/>
    <lineage>
        <taxon>Bacteria</taxon>
        <taxon>Pseudomonadati</taxon>
        <taxon>Aquificota</taxon>
        <taxon>Aquificia</taxon>
        <taxon>Aquificales</taxon>
        <taxon>Aquificaceae</taxon>
        <taxon>Aquifex</taxon>
    </lineage>
</organism>
<evidence type="ECO:0000305" key="1"/>
<comment type="similarity">
    <text evidence="1">Belongs to the UPF0098 family.</text>
</comment>
<sequence>MLGSLIVNFKLFSAGGAIMEVFSRSFKNGEEIPKVYTCDGKDISPHIGWEDVPEGTKSFVLIMDDPDAPIGTFTHWVVYDIPSQTRELLEDFPKVPEVSGIKQGINDFGRVGYGGPCPPRGHGYHRYFFKVFALSVESLGLPPGASRKDVELKMNGKILAQAHIIGLYKRD</sequence>
<reference key="1">
    <citation type="journal article" date="1998" name="Nature">
        <title>The complete genome of the hyperthermophilic bacterium Aquifex aeolicus.</title>
        <authorList>
            <person name="Deckert G."/>
            <person name="Warren P.V."/>
            <person name="Gaasterland T."/>
            <person name="Young W.G."/>
            <person name="Lenox A.L."/>
            <person name="Graham D.E."/>
            <person name="Overbeek R."/>
            <person name="Snead M.A."/>
            <person name="Keller M."/>
            <person name="Aujay M."/>
            <person name="Huber R."/>
            <person name="Feldman R.A."/>
            <person name="Short J.M."/>
            <person name="Olsen G.J."/>
            <person name="Swanson R.V."/>
        </authorList>
    </citation>
    <scope>NUCLEOTIDE SEQUENCE [LARGE SCALE GENOMIC DNA]</scope>
    <source>
        <strain>VF5</strain>
    </source>
</reference>
<accession>O67293</accession>